<reference key="1">
    <citation type="journal article" date="2002" name="Plant Physiol.">
        <title>Arabidopsis ABI5 subfamily members have distinct DNA-binding and transcriptional activities.</title>
        <authorList>
            <person name="Kim S.Y."/>
            <person name="Ma J."/>
            <person name="Perret P."/>
            <person name="Li Z."/>
            <person name="Thomas T.L."/>
        </authorList>
    </citation>
    <scope>NUCLEOTIDE SEQUENCE [MRNA]</scope>
    <scope>TISSUE SPECIFICITY</scope>
    <scope>DNA-BINDING</scope>
    <scope>HETERODIMERIZATION</scope>
</reference>
<reference key="2">
    <citation type="journal article" date="1999" name="Nature">
        <title>Sequence and analysis of chromosome 2 of the plant Arabidopsis thaliana.</title>
        <authorList>
            <person name="Lin X."/>
            <person name="Kaul S."/>
            <person name="Rounsley S.D."/>
            <person name="Shea T.P."/>
            <person name="Benito M.-I."/>
            <person name="Town C.D."/>
            <person name="Fujii C.Y."/>
            <person name="Mason T.M."/>
            <person name="Bowman C.L."/>
            <person name="Barnstead M.E."/>
            <person name="Feldblyum T.V."/>
            <person name="Buell C.R."/>
            <person name="Ketchum K.A."/>
            <person name="Lee J.J."/>
            <person name="Ronning C.M."/>
            <person name="Koo H.L."/>
            <person name="Moffat K.S."/>
            <person name="Cronin L.A."/>
            <person name="Shen M."/>
            <person name="Pai G."/>
            <person name="Van Aken S."/>
            <person name="Umayam L."/>
            <person name="Tallon L.J."/>
            <person name="Gill J.E."/>
            <person name="Adams M.D."/>
            <person name="Carrera A.J."/>
            <person name="Creasy T.H."/>
            <person name="Goodman H.M."/>
            <person name="Somerville C.R."/>
            <person name="Copenhaver G.P."/>
            <person name="Preuss D."/>
            <person name="Nierman W.C."/>
            <person name="White O."/>
            <person name="Eisen J.A."/>
            <person name="Salzberg S.L."/>
            <person name="Fraser C.M."/>
            <person name="Venter J.C."/>
        </authorList>
    </citation>
    <scope>NUCLEOTIDE SEQUENCE [LARGE SCALE GENOMIC DNA]</scope>
    <source>
        <strain>cv. Columbia</strain>
    </source>
</reference>
<reference key="3">
    <citation type="journal article" date="2017" name="Plant J.">
        <title>Araport11: a complete reannotation of the Arabidopsis thaliana reference genome.</title>
        <authorList>
            <person name="Cheng C.Y."/>
            <person name="Krishnakumar V."/>
            <person name="Chan A.P."/>
            <person name="Thibaud-Nissen F."/>
            <person name="Schobel S."/>
            <person name="Town C.D."/>
        </authorList>
    </citation>
    <scope>GENOME REANNOTATION</scope>
    <source>
        <strain>cv. Columbia</strain>
    </source>
</reference>
<reference key="4">
    <citation type="journal article" date="2002" name="Science">
        <title>Functional annotation of a full-length Arabidopsis cDNA collection.</title>
        <authorList>
            <person name="Seki M."/>
            <person name="Narusaka M."/>
            <person name="Kamiya A."/>
            <person name="Ishida J."/>
            <person name="Satou M."/>
            <person name="Sakurai T."/>
            <person name="Nakajima M."/>
            <person name="Enju A."/>
            <person name="Akiyama K."/>
            <person name="Oono Y."/>
            <person name="Muramatsu M."/>
            <person name="Hayashizaki Y."/>
            <person name="Kawai J."/>
            <person name="Carninci P."/>
            <person name="Itoh M."/>
            <person name="Ishii Y."/>
            <person name="Arakawa T."/>
            <person name="Shibata K."/>
            <person name="Shinagawa A."/>
            <person name="Shinozaki K."/>
        </authorList>
    </citation>
    <scope>NUCLEOTIDE SEQUENCE [LARGE SCALE MRNA]</scope>
    <source>
        <strain>cv. Columbia</strain>
    </source>
</reference>
<reference key="5">
    <citation type="submission" date="2006-04" db="EMBL/GenBank/DDBJ databases">
        <title>Arabidopsis ORF clones.</title>
        <authorList>
            <person name="Shinn P."/>
            <person name="Chen H."/>
            <person name="Kim C.J."/>
            <person name="Ecker J.R."/>
        </authorList>
    </citation>
    <scope>NUCLEOTIDE SEQUENCE [LARGE SCALE MRNA]</scope>
    <source>
        <strain>cv. Columbia</strain>
    </source>
</reference>
<reference key="6">
    <citation type="submission" date="2002-03" db="EMBL/GenBank/DDBJ databases">
        <title>Full-length cDNA from Arabidopsis thaliana.</title>
        <authorList>
            <person name="Brover V.V."/>
            <person name="Troukhan M.E."/>
            <person name="Alexandrov N.A."/>
            <person name="Lu Y.-P."/>
            <person name="Flavell R.B."/>
            <person name="Feldmann K.A."/>
        </authorList>
    </citation>
    <scope>NUCLEOTIDE SEQUENCE [LARGE SCALE MRNA]</scope>
</reference>
<reference key="7">
    <citation type="journal article" date="2002" name="Plant Cell">
        <title>The homologous ABI5 and EEL transcription factors function antagonistically to fine-tune gene expression during late embryogenesis.</title>
        <authorList>
            <person name="Bensmihen S."/>
            <person name="Rippa S."/>
            <person name="Lambert G."/>
            <person name="Jublot D."/>
            <person name="Pautot V."/>
            <person name="Granier F."/>
            <person name="Giraudat J."/>
            <person name="Parcy F."/>
        </authorList>
    </citation>
    <scope>NUCLEOTIDE SEQUENCE [MRNA] OF 37-262</scope>
    <scope>IDENTIFICATION</scope>
    <scope>DISRUPTION PHENOTYPE</scope>
</reference>
<reference key="8">
    <citation type="journal article" date="2002" name="Trends Plant Sci.">
        <title>bZIP transcription factors in Arabidopsis.</title>
        <authorList>
            <person name="Jakoby M."/>
            <person name="Weisshaar B."/>
            <person name="Droege-Laser W."/>
            <person name="Vicente-Carbajosa J."/>
            <person name="Tiedemann J."/>
            <person name="Kroj T."/>
            <person name="Parcy F."/>
        </authorList>
    </citation>
    <scope>GENE FAMILY</scope>
    <scope>NOMENCLATURE</scope>
</reference>
<reference key="9">
    <citation type="journal article" date="2005" name="J. Exp. Bot.">
        <title>Characterization of three homologous basic leucine zipper transcription factors (bZIP) of the ABI5 family during Arabidopsis thaliana embryo maturation.</title>
        <authorList>
            <person name="Bensmihen S."/>
            <person name="Giraudat J."/>
            <person name="Parcy F."/>
        </authorList>
    </citation>
    <scope>SUBCELLULAR LOCATION</scope>
    <scope>DEVELOPMENTAL STAGE</scope>
</reference>
<reference key="10">
    <citation type="journal article" date="2008" name="Plant Mol. Biol.">
        <title>A small plant-specific protein family of ABI five binding proteins (AFPs) regulates stress response in germinating Arabidopsis seeds and seedlings.</title>
        <authorList>
            <person name="Garcia M.E."/>
            <person name="Lynch T.J."/>
            <person name="Peeters J."/>
            <person name="Snowden C."/>
            <person name="Finkelstein R.R."/>
        </authorList>
    </citation>
    <scope>INTERACTION WITH AFP2; AFP3 AND AFP4</scope>
</reference>
<proteinExistence type="evidence at protein level"/>
<accession>Q9C5Q2</accession>
<accession>O80677</accession>
<accession>Q8GXQ0</accession>
<accession>Q8LGU9</accession>
<name>AI5L3_ARATH</name>
<feature type="chain" id="PRO_0000369608" description="ABSCISIC ACID-INSENSITIVE 5-like protein 3">
    <location>
        <begin position="1"/>
        <end position="262"/>
    </location>
</feature>
<feature type="domain" description="bZIP" evidence="4">
    <location>
        <begin position="190"/>
        <end position="253"/>
    </location>
</feature>
<feature type="region of interest" description="Basic motif" evidence="4">
    <location>
        <begin position="192"/>
        <end position="211"/>
    </location>
</feature>
<feature type="region of interest" description="Leucine-zipper" evidence="4">
    <location>
        <begin position="218"/>
        <end position="232"/>
    </location>
</feature>
<feature type="region of interest" description="Disordered" evidence="5">
    <location>
        <begin position="239"/>
        <end position="262"/>
    </location>
</feature>
<feature type="compositionally biased region" description="Basic and acidic residues" evidence="5">
    <location>
        <begin position="239"/>
        <end position="252"/>
    </location>
</feature>
<feature type="modified residue" description="Phosphoserine" evidence="3">
    <location>
        <position position="21"/>
    </location>
</feature>
<feature type="modified residue" description="Phosphoserine" evidence="1">
    <location>
        <position position="43"/>
    </location>
</feature>
<feature type="modified residue" description="Phosphoserine" evidence="2">
    <location>
        <position position="66"/>
    </location>
</feature>
<feature type="modified residue" description="Phosphothreonine" evidence="3">
    <location>
        <position position="104"/>
    </location>
</feature>
<feature type="sequence conflict" description="In Ref. 4; BAC42739." evidence="10" ref="4">
    <original>T</original>
    <variation>S</variation>
    <location>
        <position position="121"/>
    </location>
</feature>
<sequence>MGSIRGNIEEPISQSLTRQNSLYSLKLHEVQTHLGSSGKPLGSMNLDELLKTVLPPAEEGLVRQGSLTLPRDLSKKTVDEVWRDIQQDKNGNGTSTTTTHKQPTLGEITLEDLLLRAGVVTETVVPQENVVNIASNGQWVEYHHQPQQQQGFMTYPVCEMQDMVMMGGLSDTPQAPGRKRVAGEIVEKTVERRQKRMIKNRESAARSRARKQAYTHELEIKVSRLEEENEKLRRLKEVEKILPSEPPPDPKWKLRRTNSASL</sequence>
<evidence type="ECO:0000250" key="1">
    <source>
        <dbReference type="UniProtKB" id="Q9LES3"/>
    </source>
</evidence>
<evidence type="ECO:0000250" key="2">
    <source>
        <dbReference type="UniProtKB" id="Q9M7Q2"/>
    </source>
</evidence>
<evidence type="ECO:0000255" key="3"/>
<evidence type="ECO:0000255" key="4">
    <source>
        <dbReference type="PROSITE-ProRule" id="PRU00978"/>
    </source>
</evidence>
<evidence type="ECO:0000256" key="5">
    <source>
        <dbReference type="SAM" id="MobiDB-lite"/>
    </source>
</evidence>
<evidence type="ECO:0000269" key="6">
    <source>
    </source>
</evidence>
<evidence type="ECO:0000269" key="7">
    <source>
    </source>
</evidence>
<evidence type="ECO:0000269" key="8">
    <source>
    </source>
</evidence>
<evidence type="ECO:0000269" key="9">
    <source>
    </source>
</evidence>
<evidence type="ECO:0000305" key="10"/>
<comment type="function">
    <text>Binds to the embryo specification element and the ABA-responsive element (ABRE) of the Dc3 gene promoter and to the ABRE of the Em1 gene promoter. Could participate in abscisic acid-regulated gene expression during seed development.</text>
</comment>
<comment type="subunit">
    <text evidence="9">DNA-binding heterodimer with ABI5/DPBF1, DPBF2 or AREB3/DPBF3. Interacts with the AFP proteins AFP2, AFP3 and AFP4.</text>
</comment>
<comment type="subcellular location">
    <subcellularLocation>
        <location evidence="4 8">Nucleus</location>
    </subcellularLocation>
</comment>
<comment type="tissue specificity">
    <text evidence="7">Predominantly expressed in seeds.</text>
</comment>
<comment type="developmental stage">
    <text evidence="8">Expressed in embryo during the latest stages of seed maturation.</text>
</comment>
<comment type="disruption phenotype">
    <text evidence="6">No visible changes in phenotype.</text>
</comment>
<comment type="similarity">
    <text evidence="10">Belongs to the bZIP family. ABI5 subfamily.</text>
</comment>
<organism>
    <name type="scientific">Arabidopsis thaliana</name>
    <name type="common">Mouse-ear cress</name>
    <dbReference type="NCBI Taxonomy" id="3702"/>
    <lineage>
        <taxon>Eukaryota</taxon>
        <taxon>Viridiplantae</taxon>
        <taxon>Streptophyta</taxon>
        <taxon>Embryophyta</taxon>
        <taxon>Tracheophyta</taxon>
        <taxon>Spermatophyta</taxon>
        <taxon>Magnoliopsida</taxon>
        <taxon>eudicotyledons</taxon>
        <taxon>Gunneridae</taxon>
        <taxon>Pentapetalae</taxon>
        <taxon>rosids</taxon>
        <taxon>malvids</taxon>
        <taxon>Brassicales</taxon>
        <taxon>Brassicaceae</taxon>
        <taxon>Camelineae</taxon>
        <taxon>Arabidopsis</taxon>
    </lineage>
</organism>
<keyword id="KW-0938">Abscisic acid signaling pathway</keyword>
<keyword id="KW-0010">Activator</keyword>
<keyword id="KW-0238">DNA-binding</keyword>
<keyword id="KW-0539">Nucleus</keyword>
<keyword id="KW-0597">Phosphoprotein</keyword>
<keyword id="KW-1185">Reference proteome</keyword>
<keyword id="KW-0804">Transcription</keyword>
<keyword id="KW-0805">Transcription regulation</keyword>
<dbReference type="EMBL" id="AF334209">
    <property type="protein sequence ID" value="AAK19602.1"/>
    <property type="molecule type" value="mRNA"/>
</dbReference>
<dbReference type="EMBL" id="AC004261">
    <property type="protein sequence ID" value="AAD12004.2"/>
    <property type="molecule type" value="Genomic_DNA"/>
</dbReference>
<dbReference type="EMBL" id="CP002685">
    <property type="protein sequence ID" value="AEC09922.1"/>
    <property type="molecule type" value="Genomic_DNA"/>
</dbReference>
<dbReference type="EMBL" id="CP002685">
    <property type="protein sequence ID" value="AEC09923.1"/>
    <property type="molecule type" value="Genomic_DNA"/>
</dbReference>
<dbReference type="EMBL" id="CP002685">
    <property type="protein sequence ID" value="AEC09924.1"/>
    <property type="molecule type" value="Genomic_DNA"/>
</dbReference>
<dbReference type="EMBL" id="AK118113">
    <property type="protein sequence ID" value="BAC42739.1"/>
    <property type="molecule type" value="mRNA"/>
</dbReference>
<dbReference type="EMBL" id="BT025175">
    <property type="protein sequence ID" value="ABE77413.1"/>
    <property type="molecule type" value="mRNA"/>
</dbReference>
<dbReference type="EMBL" id="AY084668">
    <property type="protein sequence ID" value="AAM61230.1"/>
    <property type="molecule type" value="mRNA"/>
</dbReference>
<dbReference type="EMBL" id="AJ420881">
    <property type="protein sequence ID" value="CAD12766.1"/>
    <property type="molecule type" value="mRNA"/>
</dbReference>
<dbReference type="EMBL" id="BN000024">
    <property type="protein sequence ID" value="CAD29863.1"/>
    <property type="molecule type" value="mRNA"/>
</dbReference>
<dbReference type="PIR" id="T02112">
    <property type="entry name" value="T02112"/>
</dbReference>
<dbReference type="RefSeq" id="NP_565948.1">
    <property type="nucleotide sequence ID" value="NM_129672.2"/>
</dbReference>
<dbReference type="RefSeq" id="NP_850341.1">
    <property type="nucleotide sequence ID" value="NM_180010.1"/>
</dbReference>
<dbReference type="RefSeq" id="NP_973655.1">
    <property type="nucleotide sequence ID" value="NM_201926.2"/>
</dbReference>
<dbReference type="SMR" id="Q9C5Q2"/>
<dbReference type="BioGRID" id="4043">
    <property type="interactions" value="7"/>
</dbReference>
<dbReference type="FunCoup" id="Q9C5Q2">
    <property type="interactions" value="383"/>
</dbReference>
<dbReference type="IntAct" id="Q9C5Q2">
    <property type="interactions" value="9"/>
</dbReference>
<dbReference type="STRING" id="3702.Q9C5Q2"/>
<dbReference type="iPTMnet" id="Q9C5Q2"/>
<dbReference type="PaxDb" id="3702-AT2G41070.3"/>
<dbReference type="EnsemblPlants" id="AT2G41070.1">
    <property type="protein sequence ID" value="AT2G41070.1"/>
    <property type="gene ID" value="AT2G41070"/>
</dbReference>
<dbReference type="EnsemblPlants" id="AT2G41070.2">
    <property type="protein sequence ID" value="AT2G41070.2"/>
    <property type="gene ID" value="AT2G41070"/>
</dbReference>
<dbReference type="EnsemblPlants" id="AT2G41070.3">
    <property type="protein sequence ID" value="AT2G41070.3"/>
    <property type="gene ID" value="AT2G41070"/>
</dbReference>
<dbReference type="GeneID" id="818706"/>
<dbReference type="Gramene" id="AT2G41070.1">
    <property type="protein sequence ID" value="AT2G41070.1"/>
    <property type="gene ID" value="AT2G41070"/>
</dbReference>
<dbReference type="Gramene" id="AT2G41070.2">
    <property type="protein sequence ID" value="AT2G41070.2"/>
    <property type="gene ID" value="AT2G41070"/>
</dbReference>
<dbReference type="Gramene" id="AT2G41070.3">
    <property type="protein sequence ID" value="AT2G41070.3"/>
    <property type="gene ID" value="AT2G41070"/>
</dbReference>
<dbReference type="KEGG" id="ath:AT2G41070"/>
<dbReference type="Araport" id="AT2G41070"/>
<dbReference type="TAIR" id="AT2G41070">
    <property type="gene designation" value="EEL"/>
</dbReference>
<dbReference type="eggNOG" id="ENOG502QR11">
    <property type="taxonomic scope" value="Eukaryota"/>
</dbReference>
<dbReference type="HOGENOM" id="CLU_043238_0_2_1"/>
<dbReference type="InParanoid" id="Q9C5Q2"/>
<dbReference type="OrthoDB" id="644067at2759"/>
<dbReference type="PhylomeDB" id="Q9C5Q2"/>
<dbReference type="PRO" id="PR:Q9C5Q2"/>
<dbReference type="Proteomes" id="UP000006548">
    <property type="component" value="Chromosome 2"/>
</dbReference>
<dbReference type="ExpressionAtlas" id="Q9C5Q2">
    <property type="expression patterns" value="baseline and differential"/>
</dbReference>
<dbReference type="GO" id="GO:0005634">
    <property type="term" value="C:nucleus"/>
    <property type="evidence" value="ECO:0000314"/>
    <property type="project" value="TAIR"/>
</dbReference>
<dbReference type="GO" id="GO:0003677">
    <property type="term" value="F:DNA binding"/>
    <property type="evidence" value="ECO:0000314"/>
    <property type="project" value="TAIR"/>
</dbReference>
<dbReference type="GO" id="GO:0001216">
    <property type="term" value="F:DNA-binding transcription activator activity"/>
    <property type="evidence" value="ECO:0000314"/>
    <property type="project" value="TAIR"/>
</dbReference>
<dbReference type="GO" id="GO:0003700">
    <property type="term" value="F:DNA-binding transcription factor activity"/>
    <property type="evidence" value="ECO:0000250"/>
    <property type="project" value="TAIR"/>
</dbReference>
<dbReference type="GO" id="GO:0043565">
    <property type="term" value="F:sequence-specific DNA binding"/>
    <property type="evidence" value="ECO:0000314"/>
    <property type="project" value="TAIR"/>
</dbReference>
<dbReference type="GO" id="GO:0000976">
    <property type="term" value="F:transcription cis-regulatory region binding"/>
    <property type="evidence" value="ECO:0000353"/>
    <property type="project" value="TAIR"/>
</dbReference>
<dbReference type="GO" id="GO:0009738">
    <property type="term" value="P:abscisic acid-activated signaling pathway"/>
    <property type="evidence" value="ECO:0000304"/>
    <property type="project" value="TAIR"/>
</dbReference>
<dbReference type="GO" id="GO:0010115">
    <property type="term" value="P:regulation of abscisic acid biosynthetic process"/>
    <property type="evidence" value="ECO:0000270"/>
    <property type="project" value="TAIR"/>
</dbReference>
<dbReference type="GO" id="GO:0009414">
    <property type="term" value="P:response to water deprivation"/>
    <property type="evidence" value="ECO:0000315"/>
    <property type="project" value="TAIR"/>
</dbReference>
<dbReference type="GO" id="GO:0090332">
    <property type="term" value="P:stomatal closure"/>
    <property type="evidence" value="ECO:0000315"/>
    <property type="project" value="TAIR"/>
</dbReference>
<dbReference type="CDD" id="cd14707">
    <property type="entry name" value="bZIP_plant_BZIP46"/>
    <property type="match status" value="1"/>
</dbReference>
<dbReference type="FunFam" id="1.20.5.170:FF:000036">
    <property type="entry name" value="ABSCISIC ACID-INSENSITIVE 5-like protein 2"/>
    <property type="match status" value="1"/>
</dbReference>
<dbReference type="Gene3D" id="1.20.5.170">
    <property type="match status" value="1"/>
</dbReference>
<dbReference type="InterPro" id="IPR004827">
    <property type="entry name" value="bZIP"/>
</dbReference>
<dbReference type="InterPro" id="IPR043452">
    <property type="entry name" value="BZIP46-like"/>
</dbReference>
<dbReference type="InterPro" id="IPR046347">
    <property type="entry name" value="bZIP_sf"/>
</dbReference>
<dbReference type="PANTHER" id="PTHR22952:SF434">
    <property type="entry name" value="ABSCISIC ACID-INSENSITIVE 5-LIKE PROTEIN 3"/>
    <property type="match status" value="1"/>
</dbReference>
<dbReference type="PANTHER" id="PTHR22952">
    <property type="entry name" value="CAMP-RESPONSE ELEMENT BINDING PROTEIN-RELATED"/>
    <property type="match status" value="1"/>
</dbReference>
<dbReference type="Pfam" id="PF00170">
    <property type="entry name" value="bZIP_1"/>
    <property type="match status" value="1"/>
</dbReference>
<dbReference type="SMART" id="SM00338">
    <property type="entry name" value="BRLZ"/>
    <property type="match status" value="1"/>
</dbReference>
<dbReference type="SUPFAM" id="SSF57959">
    <property type="entry name" value="Leucine zipper domain"/>
    <property type="match status" value="1"/>
</dbReference>
<dbReference type="PROSITE" id="PS50217">
    <property type="entry name" value="BZIP"/>
    <property type="match status" value="1"/>
</dbReference>
<dbReference type="PROSITE" id="PS00036">
    <property type="entry name" value="BZIP_BASIC"/>
    <property type="match status" value="1"/>
</dbReference>
<gene>
    <name type="primary">DPBF4</name>
    <name type="synonym">BZIP12</name>
    <name type="synonym">EEL</name>
    <name type="ordered locus">At2g41070</name>
    <name type="ORF">T3K9.16</name>
</gene>
<protein>
    <recommendedName>
        <fullName>ABSCISIC ACID-INSENSITIVE 5-like protein 3</fullName>
    </recommendedName>
    <alternativeName>
        <fullName>Dc3 promoter-binding factor 4</fullName>
        <shortName>AtDPBF4</shortName>
    </alternativeName>
    <alternativeName>
        <fullName>Protein ENHANCED EM LEVEL</fullName>
    </alternativeName>
    <alternativeName>
        <fullName>bZIP transcription factor 12</fullName>
        <shortName>AtbZIP12</shortName>
    </alternativeName>
</protein>